<accession>Q8EWD1</accession>
<reference key="1">
    <citation type="journal article" date="2002" name="Nucleic Acids Res.">
        <title>The complete genomic sequence of Mycoplasma penetrans, an intracellular bacterial pathogen in humans.</title>
        <authorList>
            <person name="Sasaki Y."/>
            <person name="Ishikawa J."/>
            <person name="Yamashita A."/>
            <person name="Oshima K."/>
            <person name="Kenri T."/>
            <person name="Furuya K."/>
            <person name="Yoshino C."/>
            <person name="Horino A."/>
            <person name="Shiba T."/>
            <person name="Sasaki T."/>
            <person name="Hattori M."/>
        </authorList>
    </citation>
    <scope>NUCLEOTIDE SEQUENCE [LARGE SCALE GENOMIC DNA]</scope>
    <source>
        <strain>HF-2</strain>
    </source>
</reference>
<sequence>MKNLILKEILNNELKRQQGYIELIASENYVSEQILEATGSVFTNKYCEGYPNRRYYGGCEYADQIEQLAIDKAKEIFNAKFANVQPHSGTQANVAAYLSVLKPNDKILAMGLNEGGHLSHGSKVNISGKTYEADHYGVDKETQCLDYDAILKQAQEVKPKLIVCGASNYSRVVDFKKFGEIAKSVGAYLLADVAHISGLIVAGYHPNPLPYADIVTTTTHKTLRGPRSGLILTNNEELIKKINSAVFPGSQGGPLMHVIAAKYLCFDEASKPEFKTYIKNVIDNIAILSQTLKELGYKIIADGSDNHLLSVDLYSSKQITGDLVEQWLEQAKIVVNKNLIPYDINSAKSPSGIRIGSAAMTTRGFTTKEFKQIGLWIHEIIESKGNPNTINKIRNEVDLLVKKFPIYQDIKY</sequence>
<keyword id="KW-0028">Amino-acid biosynthesis</keyword>
<keyword id="KW-0963">Cytoplasm</keyword>
<keyword id="KW-0554">One-carbon metabolism</keyword>
<keyword id="KW-0663">Pyridoxal phosphate</keyword>
<keyword id="KW-1185">Reference proteome</keyword>
<keyword id="KW-0808">Transferase</keyword>
<feature type="chain" id="PRO_0000113615" description="Serine hydroxymethyltransferase">
    <location>
        <begin position="1"/>
        <end position="412"/>
    </location>
</feature>
<feature type="binding site" evidence="1">
    <location>
        <position position="112"/>
    </location>
    <ligand>
        <name>(6S)-5,6,7,8-tetrahydrofolate</name>
        <dbReference type="ChEBI" id="CHEBI:57453"/>
    </ligand>
</feature>
<feature type="binding site" evidence="1">
    <location>
        <begin position="116"/>
        <end position="118"/>
    </location>
    <ligand>
        <name>(6S)-5,6,7,8-tetrahydrofolate</name>
        <dbReference type="ChEBI" id="CHEBI:57453"/>
    </ligand>
</feature>
<feature type="binding site" evidence="1">
    <location>
        <position position="237"/>
    </location>
    <ligand>
        <name>(6S)-5,6,7,8-tetrahydrofolate</name>
        <dbReference type="ChEBI" id="CHEBI:57453"/>
    </ligand>
</feature>
<feature type="site" description="Plays an important role in substrate specificity" evidence="1">
    <location>
        <position position="220"/>
    </location>
</feature>
<feature type="modified residue" description="N6-(pyridoxal phosphate)lysine" evidence="1">
    <location>
        <position position="221"/>
    </location>
</feature>
<proteinExistence type="inferred from homology"/>
<gene>
    <name evidence="1" type="primary">glyA</name>
    <name type="ordered locus">MYPE2730</name>
</gene>
<dbReference type="EC" id="2.1.2.1" evidence="1"/>
<dbReference type="EMBL" id="BA000026">
    <property type="protein sequence ID" value="BAC44065.1"/>
    <property type="status" value="ALT_INIT"/>
    <property type="molecule type" value="Genomic_DNA"/>
</dbReference>
<dbReference type="RefSeq" id="WP_044891230.1">
    <property type="nucleotide sequence ID" value="NC_004432.1"/>
</dbReference>
<dbReference type="SMR" id="Q8EWD1"/>
<dbReference type="FunCoup" id="Q8EWD1">
    <property type="interactions" value="230"/>
</dbReference>
<dbReference type="STRING" id="272633.gene:10731376"/>
<dbReference type="KEGG" id="mpe:MYPE2730"/>
<dbReference type="eggNOG" id="COG0112">
    <property type="taxonomic scope" value="Bacteria"/>
</dbReference>
<dbReference type="HOGENOM" id="CLU_022477_2_1_14"/>
<dbReference type="InParanoid" id="Q8EWD1"/>
<dbReference type="UniPathway" id="UPA00193"/>
<dbReference type="UniPathway" id="UPA00288">
    <property type="reaction ID" value="UER01023"/>
</dbReference>
<dbReference type="Proteomes" id="UP000002522">
    <property type="component" value="Chromosome"/>
</dbReference>
<dbReference type="GO" id="GO:0005829">
    <property type="term" value="C:cytosol"/>
    <property type="evidence" value="ECO:0007669"/>
    <property type="project" value="TreeGrafter"/>
</dbReference>
<dbReference type="GO" id="GO:0004372">
    <property type="term" value="F:glycine hydroxymethyltransferase activity"/>
    <property type="evidence" value="ECO:0007669"/>
    <property type="project" value="UniProtKB-UniRule"/>
</dbReference>
<dbReference type="GO" id="GO:0030170">
    <property type="term" value="F:pyridoxal phosphate binding"/>
    <property type="evidence" value="ECO:0007669"/>
    <property type="project" value="UniProtKB-UniRule"/>
</dbReference>
<dbReference type="GO" id="GO:0019264">
    <property type="term" value="P:glycine biosynthetic process from serine"/>
    <property type="evidence" value="ECO:0007669"/>
    <property type="project" value="UniProtKB-UniRule"/>
</dbReference>
<dbReference type="GO" id="GO:0035999">
    <property type="term" value="P:tetrahydrofolate interconversion"/>
    <property type="evidence" value="ECO:0007669"/>
    <property type="project" value="UniProtKB-UniRule"/>
</dbReference>
<dbReference type="CDD" id="cd00378">
    <property type="entry name" value="SHMT"/>
    <property type="match status" value="1"/>
</dbReference>
<dbReference type="FunFam" id="3.40.640.10:FF:000001">
    <property type="entry name" value="Serine hydroxymethyltransferase"/>
    <property type="match status" value="1"/>
</dbReference>
<dbReference type="Gene3D" id="3.90.1150.10">
    <property type="entry name" value="Aspartate Aminotransferase, domain 1"/>
    <property type="match status" value="1"/>
</dbReference>
<dbReference type="Gene3D" id="3.40.640.10">
    <property type="entry name" value="Type I PLP-dependent aspartate aminotransferase-like (Major domain)"/>
    <property type="match status" value="1"/>
</dbReference>
<dbReference type="HAMAP" id="MF_00051">
    <property type="entry name" value="SHMT"/>
    <property type="match status" value="1"/>
</dbReference>
<dbReference type="InterPro" id="IPR015424">
    <property type="entry name" value="PyrdxlP-dep_Trfase"/>
</dbReference>
<dbReference type="InterPro" id="IPR015421">
    <property type="entry name" value="PyrdxlP-dep_Trfase_major"/>
</dbReference>
<dbReference type="InterPro" id="IPR015422">
    <property type="entry name" value="PyrdxlP-dep_Trfase_small"/>
</dbReference>
<dbReference type="InterPro" id="IPR001085">
    <property type="entry name" value="Ser_HO-MeTrfase"/>
</dbReference>
<dbReference type="InterPro" id="IPR049943">
    <property type="entry name" value="Ser_HO-MeTrfase-like"/>
</dbReference>
<dbReference type="InterPro" id="IPR019798">
    <property type="entry name" value="Ser_HO-MeTrfase_PLP_BS"/>
</dbReference>
<dbReference type="InterPro" id="IPR039429">
    <property type="entry name" value="SHMT-like_dom"/>
</dbReference>
<dbReference type="NCBIfam" id="NF000586">
    <property type="entry name" value="PRK00011.1"/>
    <property type="match status" value="1"/>
</dbReference>
<dbReference type="PANTHER" id="PTHR11680">
    <property type="entry name" value="SERINE HYDROXYMETHYLTRANSFERASE"/>
    <property type="match status" value="1"/>
</dbReference>
<dbReference type="PANTHER" id="PTHR11680:SF35">
    <property type="entry name" value="SERINE HYDROXYMETHYLTRANSFERASE 1"/>
    <property type="match status" value="1"/>
</dbReference>
<dbReference type="Pfam" id="PF00464">
    <property type="entry name" value="SHMT"/>
    <property type="match status" value="1"/>
</dbReference>
<dbReference type="PIRSF" id="PIRSF000412">
    <property type="entry name" value="SHMT"/>
    <property type="match status" value="1"/>
</dbReference>
<dbReference type="SUPFAM" id="SSF53383">
    <property type="entry name" value="PLP-dependent transferases"/>
    <property type="match status" value="1"/>
</dbReference>
<dbReference type="PROSITE" id="PS00096">
    <property type="entry name" value="SHMT"/>
    <property type="match status" value="1"/>
</dbReference>
<comment type="function">
    <text evidence="1">Catalyzes the reversible interconversion of serine and glycine with tetrahydrofolate (THF) serving as the one-carbon carrier. This reaction serves as the major source of one-carbon groups required for the biosynthesis of purines, thymidylate, methionine, and other important biomolecules. Also exhibits THF-independent aldolase activity toward beta-hydroxyamino acids, producing glycine and aldehydes, via a retro-aldol mechanism.</text>
</comment>
<comment type="catalytic activity">
    <reaction evidence="1">
        <text>(6R)-5,10-methylene-5,6,7,8-tetrahydrofolate + glycine + H2O = (6S)-5,6,7,8-tetrahydrofolate + L-serine</text>
        <dbReference type="Rhea" id="RHEA:15481"/>
        <dbReference type="ChEBI" id="CHEBI:15377"/>
        <dbReference type="ChEBI" id="CHEBI:15636"/>
        <dbReference type="ChEBI" id="CHEBI:33384"/>
        <dbReference type="ChEBI" id="CHEBI:57305"/>
        <dbReference type="ChEBI" id="CHEBI:57453"/>
        <dbReference type="EC" id="2.1.2.1"/>
    </reaction>
</comment>
<comment type="cofactor">
    <cofactor evidence="1">
        <name>pyridoxal 5'-phosphate</name>
        <dbReference type="ChEBI" id="CHEBI:597326"/>
    </cofactor>
</comment>
<comment type="pathway">
    <text evidence="1">One-carbon metabolism; tetrahydrofolate interconversion.</text>
</comment>
<comment type="pathway">
    <text evidence="1">Amino-acid biosynthesis; glycine biosynthesis; glycine from L-serine: step 1/1.</text>
</comment>
<comment type="subunit">
    <text evidence="1">Homodimer.</text>
</comment>
<comment type="subcellular location">
    <subcellularLocation>
        <location evidence="1">Cytoplasm</location>
    </subcellularLocation>
</comment>
<comment type="similarity">
    <text evidence="1">Belongs to the SHMT family.</text>
</comment>
<comment type="sequence caution" evidence="2">
    <conflict type="erroneous initiation">
        <sequence resource="EMBL-CDS" id="BAC44065"/>
    </conflict>
</comment>
<name>GLYA_MALP2</name>
<evidence type="ECO:0000255" key="1">
    <source>
        <dbReference type="HAMAP-Rule" id="MF_00051"/>
    </source>
</evidence>
<evidence type="ECO:0000305" key="2"/>
<protein>
    <recommendedName>
        <fullName evidence="1">Serine hydroxymethyltransferase</fullName>
        <shortName evidence="1">SHMT</shortName>
        <shortName evidence="1">Serine methylase</shortName>
        <ecNumber evidence="1">2.1.2.1</ecNumber>
    </recommendedName>
</protein>
<organism>
    <name type="scientific">Malacoplasma penetrans (strain HF-2)</name>
    <name type="common">Mycoplasma penetrans</name>
    <dbReference type="NCBI Taxonomy" id="272633"/>
    <lineage>
        <taxon>Bacteria</taxon>
        <taxon>Bacillati</taxon>
        <taxon>Mycoplasmatota</taxon>
        <taxon>Mycoplasmoidales</taxon>
        <taxon>Mycoplasmoidaceae</taxon>
        <taxon>Malacoplasma</taxon>
    </lineage>
</organism>